<dbReference type="EC" id="3.2.1.4"/>
<dbReference type="EC" id="3.2.1.8"/>
<dbReference type="EMBL" id="X54931">
    <property type="protein sequence ID" value="CAA38692.1"/>
    <property type="molecule type" value="Genomic_DNA"/>
</dbReference>
<dbReference type="PIR" id="S12017">
    <property type="entry name" value="S12017"/>
</dbReference>
<dbReference type="SMR" id="P23660"/>
<dbReference type="CAZy" id="GH5">
    <property type="family name" value="Glycoside Hydrolase Family 5"/>
</dbReference>
<dbReference type="eggNOG" id="COG2730">
    <property type="taxonomic scope" value="Bacteria"/>
</dbReference>
<dbReference type="GO" id="GO:0009986">
    <property type="term" value="C:cell surface"/>
    <property type="evidence" value="ECO:0007669"/>
    <property type="project" value="TreeGrafter"/>
</dbReference>
<dbReference type="GO" id="GO:0005737">
    <property type="term" value="C:cytoplasm"/>
    <property type="evidence" value="ECO:0007669"/>
    <property type="project" value="UniProtKB-SubCell"/>
</dbReference>
<dbReference type="GO" id="GO:0005576">
    <property type="term" value="C:extracellular region"/>
    <property type="evidence" value="ECO:0007669"/>
    <property type="project" value="TreeGrafter"/>
</dbReference>
<dbReference type="GO" id="GO:0008422">
    <property type="term" value="F:beta-glucosidase activity"/>
    <property type="evidence" value="ECO:0007669"/>
    <property type="project" value="TreeGrafter"/>
</dbReference>
<dbReference type="GO" id="GO:0008810">
    <property type="term" value="F:cellulase activity"/>
    <property type="evidence" value="ECO:0007669"/>
    <property type="project" value="UniProtKB-EC"/>
</dbReference>
<dbReference type="GO" id="GO:0031176">
    <property type="term" value="F:endo-1,4-beta-xylanase activity"/>
    <property type="evidence" value="ECO:0007669"/>
    <property type="project" value="UniProtKB-EC"/>
</dbReference>
<dbReference type="GO" id="GO:0030245">
    <property type="term" value="P:cellulose catabolic process"/>
    <property type="evidence" value="ECO:0007669"/>
    <property type="project" value="UniProtKB-KW"/>
</dbReference>
<dbReference type="GO" id="GO:0045493">
    <property type="term" value="P:xylan catabolic process"/>
    <property type="evidence" value="ECO:0007669"/>
    <property type="project" value="UniProtKB-KW"/>
</dbReference>
<dbReference type="Gene3D" id="3.20.20.80">
    <property type="entry name" value="Glycosidases"/>
    <property type="match status" value="1"/>
</dbReference>
<dbReference type="InterPro" id="IPR001547">
    <property type="entry name" value="Glyco_hydro_5"/>
</dbReference>
<dbReference type="InterPro" id="IPR018087">
    <property type="entry name" value="Glyco_hydro_5_CS"/>
</dbReference>
<dbReference type="InterPro" id="IPR017853">
    <property type="entry name" value="Glycoside_hydrolase_SF"/>
</dbReference>
<dbReference type="InterPro" id="IPR050386">
    <property type="entry name" value="Glycosyl_hydrolase_5"/>
</dbReference>
<dbReference type="PANTHER" id="PTHR31297:SF41">
    <property type="entry name" value="ENDOGLUCANASE, PUTATIVE (AFU_ORTHOLOGUE AFUA_5G01830)-RELATED"/>
    <property type="match status" value="1"/>
</dbReference>
<dbReference type="PANTHER" id="PTHR31297">
    <property type="entry name" value="GLUCAN ENDO-1,6-BETA-GLUCOSIDASE B"/>
    <property type="match status" value="1"/>
</dbReference>
<dbReference type="Pfam" id="PF00150">
    <property type="entry name" value="Cellulase"/>
    <property type="match status" value="1"/>
</dbReference>
<dbReference type="SUPFAM" id="SSF51445">
    <property type="entry name" value="(Trans)glycosidases"/>
    <property type="match status" value="1"/>
</dbReference>
<dbReference type="PROSITE" id="PS00659">
    <property type="entry name" value="GLYCOSYL_HYDROL_F5"/>
    <property type="match status" value="1"/>
</dbReference>
<protein>
    <recommendedName>
        <fullName>Endoglucanase A</fullName>
        <ecNumber>3.2.1.4</ecNumber>
    </recommendedName>
    <alternativeName>
        <fullName>Cellulase A</fullName>
    </alternativeName>
    <alternativeName>
        <fullName>Endo-1,4-beta-glucanase A</fullName>
        <shortName>EGA</shortName>
    </alternativeName>
    <alternativeName>
        <fullName>Endo-1,4-beta-xylanase</fullName>
        <ecNumber>3.2.1.8</ecNumber>
    </alternativeName>
</protein>
<sequence length="364" mass="41218">MRKPDKDADRLTTLDLARSGEVRDISAMELVGEMKTGWNLGNSLDATGAPGNASEVNWGNPKTTKEMIDAVYNKGFDVIRIPVTWGGHVGDAPDYKIDDEWIARVQEVVNYAYDDGAYVIINSHHEEDWRIPDNEHIDAVDEKTAAIWKQVAERFKDYGDHLIFEGLNEPRVKGSPQEWNGGTEEGRRCVDRLNKTFLDTVRATGGNNEKRLLLMTTYASSSMSNVIKDTAIPEDDHIGFSIHAYTPYAFTYNANADWELFHWDDSHDGELVSLMTNLKENYLDKDIPVIITEYGAVNKDNNDEDRAKWVSSYIEYAELLGGIPCVWWDNGYYSSGNELFGIFDRNTCTWFTDTVTDAIIENAK</sequence>
<feature type="chain" id="PRO_0000184051" description="Endoglucanase A">
    <location>
        <begin position="1"/>
        <end position="364"/>
    </location>
</feature>
<feature type="active site" description="Proton donor" evidence="1">
    <location>
        <position position="169"/>
    </location>
</feature>
<feature type="active site" description="Nucleophile" evidence="1">
    <location>
        <position position="293"/>
    </location>
</feature>
<organism>
    <name type="scientific">Ruminococcus albus</name>
    <dbReference type="NCBI Taxonomy" id="1264"/>
    <lineage>
        <taxon>Bacteria</taxon>
        <taxon>Bacillati</taxon>
        <taxon>Bacillota</taxon>
        <taxon>Clostridia</taxon>
        <taxon>Eubacteriales</taxon>
        <taxon>Oscillospiraceae</taxon>
        <taxon>Ruminococcus</taxon>
    </lineage>
</organism>
<reference key="1">
    <citation type="journal article" date="1990" name="Mol. Gen. Genet.">
        <title>Nucleotide sequence of the Ruminococcus albus SY3 endoglucanase genes celA and celB.</title>
        <authorList>
            <person name="Poole D.M."/>
            <person name="Hazlewood G.P."/>
            <person name="Laurie J.I."/>
            <person name="Barker P.J."/>
            <person name="Gilbert H.J."/>
        </authorList>
    </citation>
    <scope>NUCLEOTIDE SEQUENCE [GENOMIC DNA]</scope>
    <scope>PROTEIN SEQUENCE OF 1-14</scope>
    <source>
        <strain>SY3</strain>
    </source>
</reference>
<gene>
    <name type="primary">celA</name>
</gene>
<proteinExistence type="evidence at protein level"/>
<name>GUNA_RUMAL</name>
<keyword id="KW-0119">Carbohydrate metabolism</keyword>
<keyword id="KW-0136">Cellulose degradation</keyword>
<keyword id="KW-0963">Cytoplasm</keyword>
<keyword id="KW-0903">Direct protein sequencing</keyword>
<keyword id="KW-0326">Glycosidase</keyword>
<keyword id="KW-0378">Hydrolase</keyword>
<keyword id="KW-0624">Polysaccharide degradation</keyword>
<keyword id="KW-0858">Xylan degradation</keyword>
<accession>P23660</accession>
<comment type="function">
    <text>Hydrolyzes both carboxymethylcellulose and xylan. Probably has a role in hydrolyzing oligosaccharides derived from cellulose, which are transported across the cell wall.</text>
</comment>
<comment type="catalytic activity">
    <reaction>
        <text>Endohydrolysis of (1-&gt;4)-beta-D-glucosidic linkages in cellulose, lichenin and cereal beta-D-glucans.</text>
        <dbReference type="EC" id="3.2.1.4"/>
    </reaction>
</comment>
<comment type="catalytic activity">
    <reaction>
        <text>Endohydrolysis of (1-&gt;4)-beta-D-xylosidic linkages in xylans.</text>
        <dbReference type="EC" id="3.2.1.8"/>
    </reaction>
</comment>
<comment type="subcellular location">
    <subcellularLocation>
        <location evidence="2">Cytoplasm</location>
    </subcellularLocation>
</comment>
<comment type="similarity">
    <text evidence="2">Belongs to the glycosyl hydrolase 5 (cellulase A) family.</text>
</comment>
<evidence type="ECO:0000250" key="1"/>
<evidence type="ECO:0000305" key="2"/>